<evidence type="ECO:0000255" key="1">
    <source>
        <dbReference type="HAMAP-Rule" id="MF_00120"/>
    </source>
</evidence>
<dbReference type="EC" id="6.3.5.7" evidence="1"/>
<dbReference type="EMBL" id="CP000850">
    <property type="protein sequence ID" value="ABV97020.1"/>
    <property type="molecule type" value="Genomic_DNA"/>
</dbReference>
<dbReference type="SMR" id="A8M5E6"/>
<dbReference type="STRING" id="391037.Sare_1112"/>
<dbReference type="KEGG" id="saq:Sare_1112"/>
<dbReference type="PATRIC" id="fig|391037.6.peg.1128"/>
<dbReference type="eggNOG" id="COG0154">
    <property type="taxonomic scope" value="Bacteria"/>
</dbReference>
<dbReference type="HOGENOM" id="CLU_009600_0_3_11"/>
<dbReference type="OrthoDB" id="9811471at2"/>
<dbReference type="GO" id="GO:0030956">
    <property type="term" value="C:glutamyl-tRNA(Gln) amidotransferase complex"/>
    <property type="evidence" value="ECO:0007669"/>
    <property type="project" value="InterPro"/>
</dbReference>
<dbReference type="GO" id="GO:0005524">
    <property type="term" value="F:ATP binding"/>
    <property type="evidence" value="ECO:0007669"/>
    <property type="project" value="UniProtKB-KW"/>
</dbReference>
<dbReference type="GO" id="GO:0050567">
    <property type="term" value="F:glutaminyl-tRNA synthase (glutamine-hydrolyzing) activity"/>
    <property type="evidence" value="ECO:0007669"/>
    <property type="project" value="UniProtKB-UniRule"/>
</dbReference>
<dbReference type="GO" id="GO:0006412">
    <property type="term" value="P:translation"/>
    <property type="evidence" value="ECO:0007669"/>
    <property type="project" value="UniProtKB-UniRule"/>
</dbReference>
<dbReference type="Gene3D" id="3.90.1300.10">
    <property type="entry name" value="Amidase signature (AS) domain"/>
    <property type="match status" value="1"/>
</dbReference>
<dbReference type="HAMAP" id="MF_00120">
    <property type="entry name" value="GatA"/>
    <property type="match status" value="1"/>
</dbReference>
<dbReference type="InterPro" id="IPR000120">
    <property type="entry name" value="Amidase"/>
</dbReference>
<dbReference type="InterPro" id="IPR020556">
    <property type="entry name" value="Amidase_CS"/>
</dbReference>
<dbReference type="InterPro" id="IPR023631">
    <property type="entry name" value="Amidase_dom"/>
</dbReference>
<dbReference type="InterPro" id="IPR036928">
    <property type="entry name" value="AS_sf"/>
</dbReference>
<dbReference type="InterPro" id="IPR004412">
    <property type="entry name" value="GatA"/>
</dbReference>
<dbReference type="NCBIfam" id="TIGR00132">
    <property type="entry name" value="gatA"/>
    <property type="match status" value="1"/>
</dbReference>
<dbReference type="PANTHER" id="PTHR11895:SF151">
    <property type="entry name" value="GLUTAMYL-TRNA(GLN) AMIDOTRANSFERASE SUBUNIT A"/>
    <property type="match status" value="1"/>
</dbReference>
<dbReference type="PANTHER" id="PTHR11895">
    <property type="entry name" value="TRANSAMIDASE"/>
    <property type="match status" value="1"/>
</dbReference>
<dbReference type="Pfam" id="PF01425">
    <property type="entry name" value="Amidase"/>
    <property type="match status" value="1"/>
</dbReference>
<dbReference type="SUPFAM" id="SSF75304">
    <property type="entry name" value="Amidase signature (AS) enzymes"/>
    <property type="match status" value="1"/>
</dbReference>
<dbReference type="PROSITE" id="PS00571">
    <property type="entry name" value="AMIDASES"/>
    <property type="match status" value="1"/>
</dbReference>
<sequence>MTDLTSLSAAELAGLVARGESSAAEVTQAHLDRITAVDDRVHAFLHVDTEGALDAARAVDARRAAGEPLGPLAGVPVAVKDVLTTKGIPTTAGSRILAGWRPPYDSTIVRRLRAAGTVMLGKTNMDEFAMGSSTEYSAFGPTHNPWDLSRIPGGSGGGSAAALAAYETPLSIGSDTGGSIRQPGAVTGTVGVKPTYGGTSRYGLVAFSSSLDTPGPCARTVLDAALLHEAIGGHDPSDSTSIPAPVPDVVAAARLGASGDLAGVRLGVVREFAGEGAEPGVLAAFRAAVDTLTKLGAEVVEVSCPHFQYALPAYYLIAPSECSSNLARFDGVRFGLRVGDDGNRSLEEVMSATREAGFGPEVKRRVVLGTYALSSGYYDAYYGQAQKVRTLITRDFTTAFEQVDALVSPTTPFVAFPVGARTADPYQMYLADLFTIPSNLYGGPGISVPCGLADGLPVGLQVMAPTMADDRMYRVAAALESAVGPFTPPAL</sequence>
<organism>
    <name type="scientific">Salinispora arenicola (strain CNS-205)</name>
    <dbReference type="NCBI Taxonomy" id="391037"/>
    <lineage>
        <taxon>Bacteria</taxon>
        <taxon>Bacillati</taxon>
        <taxon>Actinomycetota</taxon>
        <taxon>Actinomycetes</taxon>
        <taxon>Micromonosporales</taxon>
        <taxon>Micromonosporaceae</taxon>
        <taxon>Salinispora</taxon>
    </lineage>
</organism>
<proteinExistence type="inferred from homology"/>
<reference key="1">
    <citation type="submission" date="2007-10" db="EMBL/GenBank/DDBJ databases">
        <title>Complete sequence of Salinispora arenicola CNS-205.</title>
        <authorList>
            <consortium name="US DOE Joint Genome Institute"/>
            <person name="Copeland A."/>
            <person name="Lucas S."/>
            <person name="Lapidus A."/>
            <person name="Barry K."/>
            <person name="Glavina del Rio T."/>
            <person name="Dalin E."/>
            <person name="Tice H."/>
            <person name="Pitluck S."/>
            <person name="Foster B."/>
            <person name="Schmutz J."/>
            <person name="Larimer F."/>
            <person name="Land M."/>
            <person name="Hauser L."/>
            <person name="Kyrpides N."/>
            <person name="Ivanova N."/>
            <person name="Jensen P.R."/>
            <person name="Moore B.S."/>
            <person name="Penn K."/>
            <person name="Jenkins C."/>
            <person name="Udwary D."/>
            <person name="Xiang L."/>
            <person name="Gontang E."/>
            <person name="Richardson P."/>
        </authorList>
    </citation>
    <scope>NUCLEOTIDE SEQUENCE [LARGE SCALE GENOMIC DNA]</scope>
    <source>
        <strain>CNS-205</strain>
    </source>
</reference>
<gene>
    <name evidence="1" type="primary">gatA</name>
    <name type="ordered locus">Sare_1112</name>
</gene>
<keyword id="KW-0067">ATP-binding</keyword>
<keyword id="KW-0436">Ligase</keyword>
<keyword id="KW-0547">Nucleotide-binding</keyword>
<keyword id="KW-0648">Protein biosynthesis</keyword>
<feature type="chain" id="PRO_1000076141" description="Glutamyl-tRNA(Gln) amidotransferase subunit A">
    <location>
        <begin position="1"/>
        <end position="491"/>
    </location>
</feature>
<feature type="active site" description="Charge relay system" evidence="1">
    <location>
        <position position="80"/>
    </location>
</feature>
<feature type="active site" description="Charge relay system" evidence="1">
    <location>
        <position position="155"/>
    </location>
</feature>
<feature type="active site" description="Acyl-ester intermediate" evidence="1">
    <location>
        <position position="179"/>
    </location>
</feature>
<protein>
    <recommendedName>
        <fullName evidence="1">Glutamyl-tRNA(Gln) amidotransferase subunit A</fullName>
        <shortName evidence="1">Glu-ADT subunit A</shortName>
        <ecNumber evidence="1">6.3.5.7</ecNumber>
    </recommendedName>
</protein>
<comment type="function">
    <text evidence="1">Allows the formation of correctly charged Gln-tRNA(Gln) through the transamidation of misacylated Glu-tRNA(Gln) in organisms which lack glutaminyl-tRNA synthetase. The reaction takes place in the presence of glutamine and ATP through an activated gamma-phospho-Glu-tRNA(Gln).</text>
</comment>
<comment type="catalytic activity">
    <reaction evidence="1">
        <text>L-glutamyl-tRNA(Gln) + L-glutamine + ATP + H2O = L-glutaminyl-tRNA(Gln) + L-glutamate + ADP + phosphate + H(+)</text>
        <dbReference type="Rhea" id="RHEA:17521"/>
        <dbReference type="Rhea" id="RHEA-COMP:9681"/>
        <dbReference type="Rhea" id="RHEA-COMP:9684"/>
        <dbReference type="ChEBI" id="CHEBI:15377"/>
        <dbReference type="ChEBI" id="CHEBI:15378"/>
        <dbReference type="ChEBI" id="CHEBI:29985"/>
        <dbReference type="ChEBI" id="CHEBI:30616"/>
        <dbReference type="ChEBI" id="CHEBI:43474"/>
        <dbReference type="ChEBI" id="CHEBI:58359"/>
        <dbReference type="ChEBI" id="CHEBI:78520"/>
        <dbReference type="ChEBI" id="CHEBI:78521"/>
        <dbReference type="ChEBI" id="CHEBI:456216"/>
        <dbReference type="EC" id="6.3.5.7"/>
    </reaction>
</comment>
<comment type="subunit">
    <text evidence="1">Heterotrimer of A, B and C subunits.</text>
</comment>
<comment type="similarity">
    <text evidence="1">Belongs to the amidase family. GatA subfamily.</text>
</comment>
<name>GATA_SALAI</name>
<accession>A8M5E6</accession>